<name>PALI_YEAST</name>
<protein>
    <recommendedName>
        <fullName>pH-response regulator protein palI/RIM9</fullName>
    </recommendedName>
    <alternativeName>
        <fullName>Regulator of IME2 protein 9</fullName>
    </alternativeName>
</protein>
<comment type="function">
    <text evidence="2">Required for the proteolytic cleavage of the transcriptional repressor RIM101 in response to alkaline ambient pH, which is necessary for sporulation and invasive growth.</text>
</comment>
<comment type="subcellular location">
    <subcellularLocation>
        <location evidence="3">Cell membrane</location>
        <topology evidence="3">Multi-pass membrane protein</topology>
    </subcellularLocation>
</comment>
<comment type="similarity">
    <text evidence="3">Belongs to the palI/RIM9 family.</text>
</comment>
<evidence type="ECO:0000255" key="1"/>
<evidence type="ECO:0000269" key="2">
    <source>
    </source>
</evidence>
<evidence type="ECO:0000305" key="3"/>
<accession>Q04734</accession>
<accession>D6VZN7</accession>
<sequence length="239" mass="26697">MVSMIHIVVFLLAITTMFEILPLITVPVTKYLSLSSFRNHYYGLFGWCVRGQNQELMCTKMKIGYDSTDVDSSGHVLTLPSNSKVVVSNLLVVHPISLAFTGTLLILAVIIMVTPLGDSPEMLLFTALFSLPTFMLCLLCFLVDILLFISKLDWPGWLMLAATISVALCCSMLWVMRRVVSVKKYESQQSIAHACSMEQYSISDIYQSKQNGNSSEYEVAPTHTDSLIAPEVTYRGFIE</sequence>
<organism>
    <name type="scientific">Saccharomyces cerevisiae (strain ATCC 204508 / S288c)</name>
    <name type="common">Baker's yeast</name>
    <dbReference type="NCBI Taxonomy" id="559292"/>
    <lineage>
        <taxon>Eukaryota</taxon>
        <taxon>Fungi</taxon>
        <taxon>Dikarya</taxon>
        <taxon>Ascomycota</taxon>
        <taxon>Saccharomycotina</taxon>
        <taxon>Saccharomycetes</taxon>
        <taxon>Saccharomycetales</taxon>
        <taxon>Saccharomycetaceae</taxon>
        <taxon>Saccharomyces</taxon>
    </lineage>
</organism>
<gene>
    <name type="primary">RIM9</name>
    <name type="ordered locus">YMR063W</name>
    <name type="ORF">YM9916.02</name>
</gene>
<keyword id="KW-1003">Cell membrane</keyword>
<keyword id="KW-0472">Membrane</keyword>
<keyword id="KW-1185">Reference proteome</keyword>
<keyword id="KW-0812">Transmembrane</keyword>
<keyword id="KW-1133">Transmembrane helix</keyword>
<reference key="1">
    <citation type="journal article" date="1997" name="Genetics">
        <title>Proteolytic activation of Rim1p, a positive regulator of yeast sporulation and invasive growth.</title>
        <authorList>
            <person name="Li W."/>
            <person name="Mitchell A.P."/>
        </authorList>
    </citation>
    <scope>NUCLEOTIDE SEQUENCE [GENOMIC DNA]</scope>
    <scope>FUNCTION</scope>
</reference>
<reference key="2">
    <citation type="journal article" date="1997" name="Nature">
        <title>The nucleotide sequence of Saccharomyces cerevisiae chromosome XIII.</title>
        <authorList>
            <person name="Bowman S."/>
            <person name="Churcher C.M."/>
            <person name="Badcock K."/>
            <person name="Brown D."/>
            <person name="Chillingworth T."/>
            <person name="Connor R."/>
            <person name="Dedman K."/>
            <person name="Devlin K."/>
            <person name="Gentles S."/>
            <person name="Hamlin N."/>
            <person name="Hunt S."/>
            <person name="Jagels K."/>
            <person name="Lye G."/>
            <person name="Moule S."/>
            <person name="Odell C."/>
            <person name="Pearson D."/>
            <person name="Rajandream M.A."/>
            <person name="Rice P."/>
            <person name="Skelton J."/>
            <person name="Walsh S.V."/>
            <person name="Whitehead S."/>
            <person name="Barrell B.G."/>
        </authorList>
    </citation>
    <scope>NUCLEOTIDE SEQUENCE [LARGE SCALE GENOMIC DNA]</scope>
    <source>
        <strain>ATCC 204508 / S288c</strain>
    </source>
</reference>
<reference key="3">
    <citation type="journal article" date="2014" name="G3 (Bethesda)">
        <title>The reference genome sequence of Saccharomyces cerevisiae: Then and now.</title>
        <authorList>
            <person name="Engel S.R."/>
            <person name="Dietrich F.S."/>
            <person name="Fisk D.G."/>
            <person name="Binkley G."/>
            <person name="Balakrishnan R."/>
            <person name="Costanzo M.C."/>
            <person name="Dwight S.S."/>
            <person name="Hitz B.C."/>
            <person name="Karra K."/>
            <person name="Nash R.S."/>
            <person name="Weng S."/>
            <person name="Wong E.D."/>
            <person name="Lloyd P."/>
            <person name="Skrzypek M.S."/>
            <person name="Miyasato S.R."/>
            <person name="Simison M."/>
            <person name="Cherry J.M."/>
        </authorList>
    </citation>
    <scope>GENOME REANNOTATION</scope>
    <source>
        <strain>ATCC 204508 / S288c</strain>
    </source>
</reference>
<reference key="4">
    <citation type="journal article" date="1993" name="Curr. Genet.">
        <title>Characterization of a second nuclear gene, AEP1, required for expression of the mitochondrial OLI1 gene in Saccharomyces cerevisiae.</title>
        <authorList>
            <person name="Payne M.J."/>
            <person name="Lukins H.B."/>
        </authorList>
    </citation>
    <scope>NUCLEOTIDE SEQUENCE [GENOMIC DNA] OF 70-239</scope>
</reference>
<reference key="5">
    <citation type="journal article" date="2006" name="Proc. Natl. Acad. Sci. U.S.A.">
        <title>A global topology map of the Saccharomyces cerevisiae membrane proteome.</title>
        <authorList>
            <person name="Kim H."/>
            <person name="Melen K."/>
            <person name="Oesterberg M."/>
            <person name="von Heijne G."/>
        </authorList>
    </citation>
    <scope>TOPOLOGY [LARGE SCALE ANALYSIS]</scope>
    <source>
        <strain>ATCC 208353 / W303-1A</strain>
    </source>
</reference>
<feature type="chain" id="PRO_0000058216" description="pH-response regulator protein palI/RIM9">
    <location>
        <begin position="1"/>
        <end position="239"/>
    </location>
</feature>
<feature type="topological domain" description="Cytoplasmic" evidence="1">
    <location>
        <begin position="1"/>
        <end position="3"/>
    </location>
</feature>
<feature type="transmembrane region" description="Helical" evidence="1">
    <location>
        <begin position="4"/>
        <end position="24"/>
    </location>
</feature>
<feature type="topological domain" description="Extracellular" evidence="1">
    <location>
        <begin position="25"/>
        <end position="90"/>
    </location>
</feature>
<feature type="transmembrane region" description="Helical" evidence="1">
    <location>
        <begin position="91"/>
        <end position="111"/>
    </location>
</feature>
<feature type="topological domain" description="Cytoplasmic" evidence="1">
    <location>
        <begin position="112"/>
        <end position="128"/>
    </location>
</feature>
<feature type="transmembrane region" description="Helical" evidence="1">
    <location>
        <begin position="129"/>
        <end position="149"/>
    </location>
</feature>
<feature type="topological domain" description="Extracellular" evidence="1">
    <location>
        <begin position="150"/>
        <end position="155"/>
    </location>
</feature>
<feature type="transmembrane region" description="Helical" evidence="1">
    <location>
        <begin position="156"/>
        <end position="176"/>
    </location>
</feature>
<feature type="topological domain" description="Cytoplasmic" evidence="1">
    <location>
        <begin position="177"/>
        <end position="239"/>
    </location>
</feature>
<proteinExistence type="evidence at protein level"/>
<dbReference type="EMBL" id="U86641">
    <property type="protein sequence ID" value="AAC49630.1"/>
    <property type="molecule type" value="Genomic_DNA"/>
</dbReference>
<dbReference type="EMBL" id="Z48952">
    <property type="protein sequence ID" value="CAA88788.1"/>
    <property type="molecule type" value="Genomic_DNA"/>
</dbReference>
<dbReference type="EMBL" id="M80615">
    <property type="status" value="NOT_ANNOTATED_CDS"/>
    <property type="molecule type" value="Unassigned_DNA"/>
</dbReference>
<dbReference type="EMBL" id="BK006946">
    <property type="protein sequence ID" value="DAA09961.1"/>
    <property type="molecule type" value="Genomic_DNA"/>
</dbReference>
<dbReference type="PIR" id="S52823">
    <property type="entry name" value="S52823"/>
</dbReference>
<dbReference type="RefSeq" id="NP_013779.1">
    <property type="nucleotide sequence ID" value="NM_001182561.1"/>
</dbReference>
<dbReference type="BioGRID" id="35238">
    <property type="interactions" value="291"/>
</dbReference>
<dbReference type="DIP" id="DIP-4447N"/>
<dbReference type="FunCoup" id="Q04734">
    <property type="interactions" value="21"/>
</dbReference>
<dbReference type="IntAct" id="Q04734">
    <property type="interactions" value="1"/>
</dbReference>
<dbReference type="STRING" id="4932.YMR063W"/>
<dbReference type="iPTMnet" id="Q04734"/>
<dbReference type="PaxDb" id="4932-YMR063W"/>
<dbReference type="PeptideAtlas" id="Q04734"/>
<dbReference type="EnsemblFungi" id="YMR063W_mRNA">
    <property type="protein sequence ID" value="YMR063W"/>
    <property type="gene ID" value="YMR063W"/>
</dbReference>
<dbReference type="GeneID" id="855085"/>
<dbReference type="KEGG" id="sce:YMR063W"/>
<dbReference type="AGR" id="SGD:S000004667"/>
<dbReference type="SGD" id="S000004667">
    <property type="gene designation" value="RIM9"/>
</dbReference>
<dbReference type="VEuPathDB" id="FungiDB:YMR063W"/>
<dbReference type="eggNOG" id="ENOG502S1J0">
    <property type="taxonomic scope" value="Eukaryota"/>
</dbReference>
<dbReference type="HOGENOM" id="CLU_084537_1_0_1"/>
<dbReference type="InParanoid" id="Q04734"/>
<dbReference type="OMA" id="DWPGWLM"/>
<dbReference type="OrthoDB" id="2354757at2759"/>
<dbReference type="BioCyc" id="YEAST:G3O-32765-MONOMER"/>
<dbReference type="BioGRID-ORCS" id="855085">
    <property type="hits" value="2 hits in 10 CRISPR screens"/>
</dbReference>
<dbReference type="PRO" id="PR:Q04734"/>
<dbReference type="Proteomes" id="UP000002311">
    <property type="component" value="Chromosome XIII"/>
</dbReference>
<dbReference type="RNAct" id="Q04734">
    <property type="molecule type" value="protein"/>
</dbReference>
<dbReference type="GO" id="GO:0032153">
    <property type="term" value="C:cell division site"/>
    <property type="evidence" value="ECO:0000318"/>
    <property type="project" value="GO_Central"/>
</dbReference>
<dbReference type="GO" id="GO:0000328">
    <property type="term" value="C:fungal-type vacuole lumen"/>
    <property type="evidence" value="ECO:0000314"/>
    <property type="project" value="SGD"/>
</dbReference>
<dbReference type="GO" id="GO:0035838">
    <property type="term" value="C:growing cell tip"/>
    <property type="evidence" value="ECO:0000318"/>
    <property type="project" value="GO_Central"/>
</dbReference>
<dbReference type="GO" id="GO:0005886">
    <property type="term" value="C:plasma membrane"/>
    <property type="evidence" value="ECO:0000314"/>
    <property type="project" value="SGD"/>
</dbReference>
<dbReference type="GO" id="GO:0030437">
    <property type="term" value="P:ascospore formation"/>
    <property type="evidence" value="ECO:0000315"/>
    <property type="project" value="SGD"/>
</dbReference>
<dbReference type="InterPro" id="IPR051380">
    <property type="entry name" value="pH-response_reg_palI/RIM9"/>
</dbReference>
<dbReference type="InterPro" id="IPR009571">
    <property type="entry name" value="SUR7/Rim9-like_fungi"/>
</dbReference>
<dbReference type="PANTHER" id="PTHR28013">
    <property type="entry name" value="PROTEIN DCV1-RELATED"/>
    <property type="match status" value="1"/>
</dbReference>
<dbReference type="PANTHER" id="PTHR28013:SF3">
    <property type="entry name" value="PROTEIN DCV1-RELATED"/>
    <property type="match status" value="1"/>
</dbReference>
<dbReference type="Pfam" id="PF06687">
    <property type="entry name" value="SUR7"/>
    <property type="match status" value="1"/>
</dbReference>